<protein>
    <recommendedName>
        <fullName evidence="1">Probable dual-specificity RNA methyltransferase RlmN</fullName>
        <ecNumber evidence="1">2.1.1.192</ecNumber>
    </recommendedName>
    <alternativeName>
        <fullName evidence="1">23S rRNA (adenine(2503)-C(2))-methyltransferase</fullName>
    </alternativeName>
    <alternativeName>
        <fullName evidence="1">23S rRNA m2A2503 methyltransferase</fullName>
    </alternativeName>
    <alternativeName>
        <fullName evidence="1">Ribosomal RNA large subunit methyltransferase N</fullName>
    </alternativeName>
    <alternativeName>
        <fullName evidence="1">tRNA (adenine(37)-C(2))-methyltransferase</fullName>
    </alternativeName>
    <alternativeName>
        <fullName evidence="1">tRNA m2A37 methyltransferase</fullName>
    </alternativeName>
</protein>
<accession>A1SLQ4</accession>
<gene>
    <name evidence="1" type="primary">rlmN</name>
    <name type="ordered locus">Noca_3237</name>
</gene>
<name>RLMN_NOCSJ</name>
<comment type="function">
    <text evidence="1">Specifically methylates position 2 of adenine 2503 in 23S rRNA and position 2 of adenine 37 in tRNAs.</text>
</comment>
<comment type="catalytic activity">
    <reaction evidence="1">
        <text>adenosine(2503) in 23S rRNA + 2 reduced [2Fe-2S]-[ferredoxin] + 2 S-adenosyl-L-methionine = 2-methyladenosine(2503) in 23S rRNA + 5'-deoxyadenosine + L-methionine + 2 oxidized [2Fe-2S]-[ferredoxin] + S-adenosyl-L-homocysteine</text>
        <dbReference type="Rhea" id="RHEA:42916"/>
        <dbReference type="Rhea" id="RHEA-COMP:10000"/>
        <dbReference type="Rhea" id="RHEA-COMP:10001"/>
        <dbReference type="Rhea" id="RHEA-COMP:10152"/>
        <dbReference type="Rhea" id="RHEA-COMP:10282"/>
        <dbReference type="ChEBI" id="CHEBI:17319"/>
        <dbReference type="ChEBI" id="CHEBI:33737"/>
        <dbReference type="ChEBI" id="CHEBI:33738"/>
        <dbReference type="ChEBI" id="CHEBI:57844"/>
        <dbReference type="ChEBI" id="CHEBI:57856"/>
        <dbReference type="ChEBI" id="CHEBI:59789"/>
        <dbReference type="ChEBI" id="CHEBI:74411"/>
        <dbReference type="ChEBI" id="CHEBI:74497"/>
        <dbReference type="EC" id="2.1.1.192"/>
    </reaction>
</comment>
<comment type="catalytic activity">
    <reaction evidence="1">
        <text>adenosine(37) in tRNA + 2 reduced [2Fe-2S]-[ferredoxin] + 2 S-adenosyl-L-methionine = 2-methyladenosine(37) in tRNA + 5'-deoxyadenosine + L-methionine + 2 oxidized [2Fe-2S]-[ferredoxin] + S-adenosyl-L-homocysteine</text>
        <dbReference type="Rhea" id="RHEA:43332"/>
        <dbReference type="Rhea" id="RHEA-COMP:10000"/>
        <dbReference type="Rhea" id="RHEA-COMP:10001"/>
        <dbReference type="Rhea" id="RHEA-COMP:10162"/>
        <dbReference type="Rhea" id="RHEA-COMP:10485"/>
        <dbReference type="ChEBI" id="CHEBI:17319"/>
        <dbReference type="ChEBI" id="CHEBI:33737"/>
        <dbReference type="ChEBI" id="CHEBI:33738"/>
        <dbReference type="ChEBI" id="CHEBI:57844"/>
        <dbReference type="ChEBI" id="CHEBI:57856"/>
        <dbReference type="ChEBI" id="CHEBI:59789"/>
        <dbReference type="ChEBI" id="CHEBI:74411"/>
        <dbReference type="ChEBI" id="CHEBI:74497"/>
        <dbReference type="EC" id="2.1.1.192"/>
    </reaction>
</comment>
<comment type="cofactor">
    <cofactor evidence="1">
        <name>[4Fe-4S] cluster</name>
        <dbReference type="ChEBI" id="CHEBI:49883"/>
    </cofactor>
    <text evidence="1">Binds 1 [4Fe-4S] cluster. The cluster is coordinated with 3 cysteines and an exchangeable S-adenosyl-L-methionine.</text>
</comment>
<comment type="subcellular location">
    <subcellularLocation>
        <location evidence="1">Cytoplasm</location>
    </subcellularLocation>
</comment>
<comment type="miscellaneous">
    <text evidence="1">Reaction proceeds by a ping-pong mechanism involving intermediate methylation of a conserved cysteine residue.</text>
</comment>
<comment type="similarity">
    <text evidence="1">Belongs to the radical SAM superfamily. RlmN family.</text>
</comment>
<sequence length="376" mass="40882">MSDSERTSLPLVFDEPRGRKKPPRHLADLAPDERTAYAKELGLPGFRAKQLSTHYFSRLVDDPDQMTDLPAGQRAELVAGLLPGLMTPLRTMEADRGTTRKTLWRLFDGALVESVLMRYPDRATMCVSSQAGCGMACPFCATGQGGLQRNMSTAEIVEQVVAGARSLARGEVPGGPGRVSNVVFMGMGEPLANYKAVLGAVRRLTDPAPDGLGMSARGVTVSTVGLVPRMRQLADEGIPVTLALSLHAPDDELRNELVPINTRFSVAETVEAAWNYAKVTKRRVSIEYAMMRGINDQAWRADLLGDVLRGYGDWGWVHVNLIPLNPTPGSKWTASDPADEREFVRRLEAKAIPTTVRDTRGREIDGACGQLAATEA</sequence>
<keyword id="KW-0004">4Fe-4S</keyword>
<keyword id="KW-0963">Cytoplasm</keyword>
<keyword id="KW-1015">Disulfide bond</keyword>
<keyword id="KW-0408">Iron</keyword>
<keyword id="KW-0411">Iron-sulfur</keyword>
<keyword id="KW-0479">Metal-binding</keyword>
<keyword id="KW-0489">Methyltransferase</keyword>
<keyword id="KW-1185">Reference proteome</keyword>
<keyword id="KW-0698">rRNA processing</keyword>
<keyword id="KW-0949">S-adenosyl-L-methionine</keyword>
<keyword id="KW-0808">Transferase</keyword>
<keyword id="KW-0819">tRNA processing</keyword>
<reference key="1">
    <citation type="submission" date="2006-12" db="EMBL/GenBank/DDBJ databases">
        <title>Complete sequence of chromosome 1 of Nocardioides sp. JS614.</title>
        <authorList>
            <person name="Copeland A."/>
            <person name="Lucas S."/>
            <person name="Lapidus A."/>
            <person name="Barry K."/>
            <person name="Detter J.C."/>
            <person name="Glavina del Rio T."/>
            <person name="Hammon N."/>
            <person name="Israni S."/>
            <person name="Dalin E."/>
            <person name="Tice H."/>
            <person name="Pitluck S."/>
            <person name="Thompson L.S."/>
            <person name="Brettin T."/>
            <person name="Bruce D."/>
            <person name="Han C."/>
            <person name="Tapia R."/>
            <person name="Schmutz J."/>
            <person name="Larimer F."/>
            <person name="Land M."/>
            <person name="Hauser L."/>
            <person name="Kyrpides N."/>
            <person name="Kim E."/>
            <person name="Mattes T."/>
            <person name="Gossett J."/>
            <person name="Richardson P."/>
        </authorList>
    </citation>
    <scope>NUCLEOTIDE SEQUENCE [LARGE SCALE GENOMIC DNA]</scope>
    <source>
        <strain>ATCC BAA-499 / JS614</strain>
    </source>
</reference>
<dbReference type="EC" id="2.1.1.192" evidence="1"/>
<dbReference type="EMBL" id="CP000509">
    <property type="protein sequence ID" value="ABL82739.1"/>
    <property type="molecule type" value="Genomic_DNA"/>
</dbReference>
<dbReference type="RefSeq" id="WP_011756673.1">
    <property type="nucleotide sequence ID" value="NC_008699.1"/>
</dbReference>
<dbReference type="SMR" id="A1SLQ4"/>
<dbReference type="STRING" id="196162.Noca_3237"/>
<dbReference type="KEGG" id="nca:Noca_3237"/>
<dbReference type="eggNOG" id="COG0820">
    <property type="taxonomic scope" value="Bacteria"/>
</dbReference>
<dbReference type="HOGENOM" id="CLU_029101_0_2_11"/>
<dbReference type="OrthoDB" id="9793973at2"/>
<dbReference type="Proteomes" id="UP000000640">
    <property type="component" value="Chromosome"/>
</dbReference>
<dbReference type="GO" id="GO:0005737">
    <property type="term" value="C:cytoplasm"/>
    <property type="evidence" value="ECO:0007669"/>
    <property type="project" value="UniProtKB-SubCell"/>
</dbReference>
<dbReference type="GO" id="GO:0051539">
    <property type="term" value="F:4 iron, 4 sulfur cluster binding"/>
    <property type="evidence" value="ECO:0007669"/>
    <property type="project" value="UniProtKB-UniRule"/>
</dbReference>
<dbReference type="GO" id="GO:0046872">
    <property type="term" value="F:metal ion binding"/>
    <property type="evidence" value="ECO:0007669"/>
    <property type="project" value="UniProtKB-KW"/>
</dbReference>
<dbReference type="GO" id="GO:0070040">
    <property type="term" value="F:rRNA (adenine(2503)-C2-)-methyltransferase activity"/>
    <property type="evidence" value="ECO:0007669"/>
    <property type="project" value="UniProtKB-UniRule"/>
</dbReference>
<dbReference type="GO" id="GO:0019843">
    <property type="term" value="F:rRNA binding"/>
    <property type="evidence" value="ECO:0007669"/>
    <property type="project" value="UniProtKB-UniRule"/>
</dbReference>
<dbReference type="GO" id="GO:0002935">
    <property type="term" value="F:tRNA (adenine(37)-C2)-methyltransferase activity"/>
    <property type="evidence" value="ECO:0007669"/>
    <property type="project" value="UniProtKB-UniRule"/>
</dbReference>
<dbReference type="GO" id="GO:0000049">
    <property type="term" value="F:tRNA binding"/>
    <property type="evidence" value="ECO:0007669"/>
    <property type="project" value="UniProtKB-UniRule"/>
</dbReference>
<dbReference type="GO" id="GO:0070475">
    <property type="term" value="P:rRNA base methylation"/>
    <property type="evidence" value="ECO:0007669"/>
    <property type="project" value="UniProtKB-UniRule"/>
</dbReference>
<dbReference type="GO" id="GO:0030488">
    <property type="term" value="P:tRNA methylation"/>
    <property type="evidence" value="ECO:0007669"/>
    <property type="project" value="UniProtKB-UniRule"/>
</dbReference>
<dbReference type="CDD" id="cd01335">
    <property type="entry name" value="Radical_SAM"/>
    <property type="match status" value="1"/>
</dbReference>
<dbReference type="FunFam" id="3.20.20.70:FF:000014">
    <property type="entry name" value="Probable dual-specificity RNA methyltransferase RlmN"/>
    <property type="match status" value="1"/>
</dbReference>
<dbReference type="Gene3D" id="1.10.150.530">
    <property type="match status" value="1"/>
</dbReference>
<dbReference type="Gene3D" id="3.20.20.70">
    <property type="entry name" value="Aldolase class I"/>
    <property type="match status" value="1"/>
</dbReference>
<dbReference type="HAMAP" id="MF_01849">
    <property type="entry name" value="RNA_methyltr_RlmN"/>
    <property type="match status" value="1"/>
</dbReference>
<dbReference type="InterPro" id="IPR013785">
    <property type="entry name" value="Aldolase_TIM"/>
</dbReference>
<dbReference type="InterPro" id="IPR040072">
    <property type="entry name" value="Methyltransferase_A"/>
</dbReference>
<dbReference type="InterPro" id="IPR027492">
    <property type="entry name" value="RNA_MTrfase_RlmN"/>
</dbReference>
<dbReference type="InterPro" id="IPR004383">
    <property type="entry name" value="rRNA_lsu_MTrfase_RlmN/Cfr"/>
</dbReference>
<dbReference type="InterPro" id="IPR007197">
    <property type="entry name" value="rSAM"/>
</dbReference>
<dbReference type="NCBIfam" id="TIGR00048">
    <property type="entry name" value="rRNA_mod_RlmN"/>
    <property type="match status" value="1"/>
</dbReference>
<dbReference type="PANTHER" id="PTHR30544">
    <property type="entry name" value="23S RRNA METHYLTRANSFERASE"/>
    <property type="match status" value="1"/>
</dbReference>
<dbReference type="PANTHER" id="PTHR30544:SF5">
    <property type="entry name" value="RADICAL SAM CORE DOMAIN-CONTAINING PROTEIN"/>
    <property type="match status" value="1"/>
</dbReference>
<dbReference type="Pfam" id="PF04055">
    <property type="entry name" value="Radical_SAM"/>
    <property type="match status" value="1"/>
</dbReference>
<dbReference type="PIRSF" id="PIRSF006004">
    <property type="entry name" value="CHP00048"/>
    <property type="match status" value="1"/>
</dbReference>
<dbReference type="SFLD" id="SFLDF00275">
    <property type="entry name" value="adenosine_C2_methyltransferase"/>
    <property type="match status" value="1"/>
</dbReference>
<dbReference type="SFLD" id="SFLDS00029">
    <property type="entry name" value="Radical_SAM"/>
    <property type="match status" value="1"/>
</dbReference>
<dbReference type="SUPFAM" id="SSF102114">
    <property type="entry name" value="Radical SAM enzymes"/>
    <property type="match status" value="1"/>
</dbReference>
<dbReference type="PROSITE" id="PS51918">
    <property type="entry name" value="RADICAL_SAM"/>
    <property type="match status" value="1"/>
</dbReference>
<feature type="chain" id="PRO_0000350289" description="Probable dual-specificity RNA methyltransferase RlmN">
    <location>
        <begin position="1"/>
        <end position="376"/>
    </location>
</feature>
<feature type="domain" description="Radical SAM core" evidence="2">
    <location>
        <begin position="119"/>
        <end position="362"/>
    </location>
</feature>
<feature type="region of interest" description="Disordered" evidence="3">
    <location>
        <begin position="1"/>
        <end position="25"/>
    </location>
</feature>
<feature type="active site" description="Proton acceptor" evidence="1">
    <location>
        <position position="113"/>
    </location>
</feature>
<feature type="active site" description="S-methylcysteine intermediate" evidence="1">
    <location>
        <position position="368"/>
    </location>
</feature>
<feature type="binding site" evidence="1">
    <location>
        <position position="133"/>
    </location>
    <ligand>
        <name>[4Fe-4S] cluster</name>
        <dbReference type="ChEBI" id="CHEBI:49883"/>
        <note>4Fe-4S-S-AdoMet</note>
    </ligand>
</feature>
<feature type="binding site" evidence="1">
    <location>
        <position position="137"/>
    </location>
    <ligand>
        <name>[4Fe-4S] cluster</name>
        <dbReference type="ChEBI" id="CHEBI:49883"/>
        <note>4Fe-4S-S-AdoMet</note>
    </ligand>
</feature>
<feature type="binding site" evidence="1">
    <location>
        <position position="140"/>
    </location>
    <ligand>
        <name>[4Fe-4S] cluster</name>
        <dbReference type="ChEBI" id="CHEBI:49883"/>
        <note>4Fe-4S-S-AdoMet</note>
    </ligand>
</feature>
<feature type="binding site" evidence="1">
    <location>
        <begin position="188"/>
        <end position="189"/>
    </location>
    <ligand>
        <name>S-adenosyl-L-methionine</name>
        <dbReference type="ChEBI" id="CHEBI:59789"/>
    </ligand>
</feature>
<feature type="binding site" evidence="1">
    <location>
        <position position="222"/>
    </location>
    <ligand>
        <name>S-adenosyl-L-methionine</name>
        <dbReference type="ChEBI" id="CHEBI:59789"/>
    </ligand>
</feature>
<feature type="binding site" evidence="1">
    <location>
        <begin position="245"/>
        <end position="247"/>
    </location>
    <ligand>
        <name>S-adenosyl-L-methionine</name>
        <dbReference type="ChEBI" id="CHEBI:59789"/>
    </ligand>
</feature>
<feature type="binding site" evidence="1">
    <location>
        <position position="325"/>
    </location>
    <ligand>
        <name>S-adenosyl-L-methionine</name>
        <dbReference type="ChEBI" id="CHEBI:59789"/>
    </ligand>
</feature>
<feature type="disulfide bond" description="(transient)" evidence="1">
    <location>
        <begin position="126"/>
        <end position="368"/>
    </location>
</feature>
<proteinExistence type="inferred from homology"/>
<organism>
    <name type="scientific">Nocardioides sp. (strain ATCC BAA-499 / JS614)</name>
    <dbReference type="NCBI Taxonomy" id="196162"/>
    <lineage>
        <taxon>Bacteria</taxon>
        <taxon>Bacillati</taxon>
        <taxon>Actinomycetota</taxon>
        <taxon>Actinomycetes</taxon>
        <taxon>Propionibacteriales</taxon>
        <taxon>Nocardioidaceae</taxon>
        <taxon>Nocardioides</taxon>
    </lineage>
</organism>
<evidence type="ECO:0000255" key="1">
    <source>
        <dbReference type="HAMAP-Rule" id="MF_01849"/>
    </source>
</evidence>
<evidence type="ECO:0000255" key="2">
    <source>
        <dbReference type="PROSITE-ProRule" id="PRU01266"/>
    </source>
</evidence>
<evidence type="ECO:0000256" key="3">
    <source>
        <dbReference type="SAM" id="MobiDB-lite"/>
    </source>
</evidence>